<gene>
    <name evidence="1" type="primary">murC</name>
    <name type="ordered locus">PTH_1860</name>
</gene>
<keyword id="KW-0067">ATP-binding</keyword>
<keyword id="KW-0131">Cell cycle</keyword>
<keyword id="KW-0132">Cell division</keyword>
<keyword id="KW-0133">Cell shape</keyword>
<keyword id="KW-0961">Cell wall biogenesis/degradation</keyword>
<keyword id="KW-0963">Cytoplasm</keyword>
<keyword id="KW-0436">Ligase</keyword>
<keyword id="KW-0547">Nucleotide-binding</keyword>
<keyword id="KW-0573">Peptidoglycan synthesis</keyword>
<keyword id="KW-1185">Reference proteome</keyword>
<reference key="1">
    <citation type="journal article" date="2008" name="Genome Res.">
        <title>The genome of Pelotomaculum thermopropionicum reveals niche-associated evolution in anaerobic microbiota.</title>
        <authorList>
            <person name="Kosaka T."/>
            <person name="Kato S."/>
            <person name="Shimoyama T."/>
            <person name="Ishii S."/>
            <person name="Abe T."/>
            <person name="Watanabe K."/>
        </authorList>
    </citation>
    <scope>NUCLEOTIDE SEQUENCE [LARGE SCALE GENOMIC DNA]</scope>
    <source>
        <strain>DSM 13744 / JCM 10971 / SI</strain>
    </source>
</reference>
<feature type="chain" id="PRO_0000336853" description="UDP-N-acetylmuramate--L-alanine ligase">
    <location>
        <begin position="1"/>
        <end position="461"/>
    </location>
</feature>
<feature type="binding site" evidence="1">
    <location>
        <begin position="111"/>
        <end position="117"/>
    </location>
    <ligand>
        <name>ATP</name>
        <dbReference type="ChEBI" id="CHEBI:30616"/>
    </ligand>
</feature>
<proteinExistence type="inferred from homology"/>
<evidence type="ECO:0000255" key="1">
    <source>
        <dbReference type="HAMAP-Rule" id="MF_00046"/>
    </source>
</evidence>
<sequence>MDKKRHVHFIGIGGSGMNGIAAIMLGLGYRVTGSDLKPSAATRRLEALGATCYTRHAEENLGDADLVVASTAIPPDNIELVEARKRGLPVMHRADLLAWLMRRQKGIAVAGAHGKTTTTSMTALVLEKNGMDPTIVIGGELSEIGGNAKLGRGEYLVAEADESDGSFLKLDPVIEIITNIEDDHLDYYRSVENILAAFRRFMAKVPESGLAVACLDDPRLRELLAGYDRPCLTYALDNPEADYTMRNIRLMRQVTAGDVYYRGGFLGCLELSVPGRHNLSNAMAAVAVGRFVGLAFEGIAAALKDFRGAGRRFQLTGEVNGIKVIDDYAHHPSEIKATLKAAGQVKTGRVVGVFQPHRYTRTLFLGERFGEAFEDADVVIISDIYSAGEKPIEGVSAKTIVSAIEKHNGRKVIYLPTRQEIVDYLVQMARPGDMILTMGAGDIWSAGIELVKRLKENQKIG</sequence>
<comment type="function">
    <text evidence="1">Cell wall formation.</text>
</comment>
<comment type="catalytic activity">
    <reaction evidence="1">
        <text>UDP-N-acetyl-alpha-D-muramate + L-alanine + ATP = UDP-N-acetyl-alpha-D-muramoyl-L-alanine + ADP + phosphate + H(+)</text>
        <dbReference type="Rhea" id="RHEA:23372"/>
        <dbReference type="ChEBI" id="CHEBI:15378"/>
        <dbReference type="ChEBI" id="CHEBI:30616"/>
        <dbReference type="ChEBI" id="CHEBI:43474"/>
        <dbReference type="ChEBI" id="CHEBI:57972"/>
        <dbReference type="ChEBI" id="CHEBI:70757"/>
        <dbReference type="ChEBI" id="CHEBI:83898"/>
        <dbReference type="ChEBI" id="CHEBI:456216"/>
        <dbReference type="EC" id="6.3.2.8"/>
    </reaction>
</comment>
<comment type="pathway">
    <text evidence="1">Cell wall biogenesis; peptidoglycan biosynthesis.</text>
</comment>
<comment type="subcellular location">
    <subcellularLocation>
        <location evidence="1">Cytoplasm</location>
    </subcellularLocation>
</comment>
<comment type="similarity">
    <text evidence="1">Belongs to the MurCDEF family.</text>
</comment>
<accession>A5D144</accession>
<dbReference type="EC" id="6.3.2.8" evidence="1"/>
<dbReference type="EMBL" id="AP009389">
    <property type="protein sequence ID" value="BAF60041.1"/>
    <property type="molecule type" value="Genomic_DNA"/>
</dbReference>
<dbReference type="SMR" id="A5D144"/>
<dbReference type="STRING" id="370438.PTH_1860"/>
<dbReference type="KEGG" id="pth:PTH_1860"/>
<dbReference type="eggNOG" id="COG0773">
    <property type="taxonomic scope" value="Bacteria"/>
</dbReference>
<dbReference type="HOGENOM" id="CLU_028104_2_2_9"/>
<dbReference type="UniPathway" id="UPA00219"/>
<dbReference type="Proteomes" id="UP000006556">
    <property type="component" value="Chromosome"/>
</dbReference>
<dbReference type="GO" id="GO:0005737">
    <property type="term" value="C:cytoplasm"/>
    <property type="evidence" value="ECO:0007669"/>
    <property type="project" value="UniProtKB-SubCell"/>
</dbReference>
<dbReference type="GO" id="GO:0005524">
    <property type="term" value="F:ATP binding"/>
    <property type="evidence" value="ECO:0007669"/>
    <property type="project" value="UniProtKB-UniRule"/>
</dbReference>
<dbReference type="GO" id="GO:0008763">
    <property type="term" value="F:UDP-N-acetylmuramate-L-alanine ligase activity"/>
    <property type="evidence" value="ECO:0007669"/>
    <property type="project" value="UniProtKB-UniRule"/>
</dbReference>
<dbReference type="GO" id="GO:0051301">
    <property type="term" value="P:cell division"/>
    <property type="evidence" value="ECO:0007669"/>
    <property type="project" value="UniProtKB-KW"/>
</dbReference>
<dbReference type="GO" id="GO:0071555">
    <property type="term" value="P:cell wall organization"/>
    <property type="evidence" value="ECO:0007669"/>
    <property type="project" value="UniProtKB-KW"/>
</dbReference>
<dbReference type="GO" id="GO:0009252">
    <property type="term" value="P:peptidoglycan biosynthetic process"/>
    <property type="evidence" value="ECO:0007669"/>
    <property type="project" value="UniProtKB-UniRule"/>
</dbReference>
<dbReference type="GO" id="GO:0008360">
    <property type="term" value="P:regulation of cell shape"/>
    <property type="evidence" value="ECO:0007669"/>
    <property type="project" value="UniProtKB-KW"/>
</dbReference>
<dbReference type="Gene3D" id="3.90.190.20">
    <property type="entry name" value="Mur ligase, C-terminal domain"/>
    <property type="match status" value="1"/>
</dbReference>
<dbReference type="Gene3D" id="3.40.1190.10">
    <property type="entry name" value="Mur-like, catalytic domain"/>
    <property type="match status" value="1"/>
</dbReference>
<dbReference type="Gene3D" id="3.40.50.720">
    <property type="entry name" value="NAD(P)-binding Rossmann-like Domain"/>
    <property type="match status" value="1"/>
</dbReference>
<dbReference type="HAMAP" id="MF_00046">
    <property type="entry name" value="MurC"/>
    <property type="match status" value="1"/>
</dbReference>
<dbReference type="InterPro" id="IPR036565">
    <property type="entry name" value="Mur-like_cat_sf"/>
</dbReference>
<dbReference type="InterPro" id="IPR004101">
    <property type="entry name" value="Mur_ligase_C"/>
</dbReference>
<dbReference type="InterPro" id="IPR036615">
    <property type="entry name" value="Mur_ligase_C_dom_sf"/>
</dbReference>
<dbReference type="InterPro" id="IPR013221">
    <property type="entry name" value="Mur_ligase_cen"/>
</dbReference>
<dbReference type="InterPro" id="IPR000713">
    <property type="entry name" value="Mur_ligase_N"/>
</dbReference>
<dbReference type="InterPro" id="IPR050061">
    <property type="entry name" value="MurCDEF_pg_biosynth"/>
</dbReference>
<dbReference type="InterPro" id="IPR005758">
    <property type="entry name" value="UDP-N-AcMur_Ala_ligase_MurC"/>
</dbReference>
<dbReference type="NCBIfam" id="TIGR01082">
    <property type="entry name" value="murC"/>
    <property type="match status" value="1"/>
</dbReference>
<dbReference type="PANTHER" id="PTHR43445:SF3">
    <property type="entry name" value="UDP-N-ACETYLMURAMATE--L-ALANINE LIGASE"/>
    <property type="match status" value="1"/>
</dbReference>
<dbReference type="PANTHER" id="PTHR43445">
    <property type="entry name" value="UDP-N-ACETYLMURAMATE--L-ALANINE LIGASE-RELATED"/>
    <property type="match status" value="1"/>
</dbReference>
<dbReference type="Pfam" id="PF01225">
    <property type="entry name" value="Mur_ligase"/>
    <property type="match status" value="1"/>
</dbReference>
<dbReference type="Pfam" id="PF02875">
    <property type="entry name" value="Mur_ligase_C"/>
    <property type="match status" value="1"/>
</dbReference>
<dbReference type="Pfam" id="PF08245">
    <property type="entry name" value="Mur_ligase_M"/>
    <property type="match status" value="1"/>
</dbReference>
<dbReference type="SUPFAM" id="SSF51984">
    <property type="entry name" value="MurCD N-terminal domain"/>
    <property type="match status" value="1"/>
</dbReference>
<dbReference type="SUPFAM" id="SSF53623">
    <property type="entry name" value="MurD-like peptide ligases, catalytic domain"/>
    <property type="match status" value="1"/>
</dbReference>
<dbReference type="SUPFAM" id="SSF53244">
    <property type="entry name" value="MurD-like peptide ligases, peptide-binding domain"/>
    <property type="match status" value="1"/>
</dbReference>
<name>MURC_PELTS</name>
<protein>
    <recommendedName>
        <fullName evidence="1">UDP-N-acetylmuramate--L-alanine ligase</fullName>
        <ecNumber evidence="1">6.3.2.8</ecNumber>
    </recommendedName>
    <alternativeName>
        <fullName evidence="1">UDP-N-acetylmuramoyl-L-alanine synthetase</fullName>
    </alternativeName>
</protein>
<organism>
    <name type="scientific">Pelotomaculum thermopropionicum (strain DSM 13744 / JCM 10971 / SI)</name>
    <dbReference type="NCBI Taxonomy" id="370438"/>
    <lineage>
        <taxon>Bacteria</taxon>
        <taxon>Bacillati</taxon>
        <taxon>Bacillota</taxon>
        <taxon>Clostridia</taxon>
        <taxon>Eubacteriales</taxon>
        <taxon>Desulfotomaculaceae</taxon>
        <taxon>Pelotomaculum</taxon>
    </lineage>
</organism>